<proteinExistence type="evidence at protein level"/>
<keyword id="KW-1217">Cell adhesion impairing toxin</keyword>
<keyword id="KW-0903">Direct protein sequencing</keyword>
<keyword id="KW-1015">Disulfide bond</keyword>
<keyword id="KW-1199">Hemostasis impairing toxin</keyword>
<keyword id="KW-1201">Platelet aggregation inhibiting toxin</keyword>
<keyword id="KW-0964">Secreted</keyword>
<keyword id="KW-0800">Toxin</keyword>
<protein>
    <recommendedName>
        <fullName>Disintegrin batroxostatin</fullName>
    </recommendedName>
    <alternativeName>
        <fullName>Disintegrin colombistatin</fullName>
    </alternativeName>
    <alternativeName>
        <fullName>Platelet aggregation activation inhibitor</fullName>
    </alternativeName>
</protein>
<accession>P18618</accession>
<sequence>EAGEECDCGAPENPCCDAATCKLRPGAQCAEGLCCDQCRFKGAGKICRRARGDNPDDRCTGQSADCPRNRFY</sequence>
<evidence type="ECO:0000250" key="1"/>
<evidence type="ECO:0000250" key="2">
    <source>
        <dbReference type="UniProtKB" id="Q0NZX5"/>
    </source>
</evidence>
<evidence type="ECO:0000255" key="3">
    <source>
        <dbReference type="PROSITE-ProRule" id="PRU00068"/>
    </source>
</evidence>
<evidence type="ECO:0000256" key="4">
    <source>
        <dbReference type="SAM" id="MobiDB-lite"/>
    </source>
</evidence>
<evidence type="ECO:0000269" key="5">
    <source>
    </source>
</evidence>
<evidence type="ECO:0000269" key="6">
    <source>
    </source>
</evidence>
<evidence type="ECO:0000305" key="7"/>
<evidence type="ECO:0000305" key="8">
    <source>
    </source>
</evidence>
<evidence type="ECO:0000305" key="9">
    <source>
    </source>
</evidence>
<reference key="1">
    <citation type="journal article" date="2009" name="Arch. Toxicol.">
        <title>Colombistatin: a disintegrin isolated from the venom of the South American snake (Bothrops colombiensis) that effectively inhibits platelet aggregation and SK-Mel-28 cell adhesion.</title>
        <authorList>
            <person name="Sanchez E.E."/>
            <person name="Rodriguez-Acosta A."/>
            <person name="Palomar R."/>
            <person name="Lucena S.E."/>
            <person name="Bashir S."/>
            <person name="Soto J.G."/>
            <person name="Perez J.C."/>
        </authorList>
    </citation>
    <scope>PROTEIN SEQUENCE</scope>
    <scope>FUNCTION</scope>
    <scope>MASS SPECTROMETRY</scope>
    <scope>SUBCELLULAR LOCATION</scope>
    <source>
        <tissue>Venom</tissue>
    </source>
</reference>
<reference key="2">
    <citation type="journal article" date="1990" name="Biochim. Biophys. Acta">
        <title>Batroxostatin, an Arg-Gly-Asp-containing peptide from Bothrops atrox, is a potent inhibitor of platelet aggregation and cell interaction with fibronectin.</title>
        <authorList>
            <person name="Rucinski B."/>
            <person name="Niewiarowski S."/>
            <person name="Holt J.C."/>
            <person name="Soszka T."/>
            <person name="Knudsen K.A."/>
        </authorList>
    </citation>
    <scope>PROTEIN SEQUENCE OF 1-71</scope>
    <scope>FUNCTION</scope>
    <scope>SUBCELLULAR LOCATION</scope>
    <source>
        <tissue>Venom</tissue>
    </source>
</reference>
<comment type="function">
    <text evidence="5 6">Inhibits fibrinogen interaction with platelets. Acts by binding to the glycoprotein IIb-IIIa receptor (ITGA2B/ITGB3) on the platelet surface and inhibits aggregation induced by ADP, thrombin, platelet-activating factor and collagen. Also inhibits T24 and SK-Mel-28 cell adhesion to fibronectin with IC(50) of 4.4 uM and 33 nM, respectively.</text>
</comment>
<comment type="subunit">
    <text evidence="1">Monomer.</text>
</comment>
<comment type="subcellular location">
    <subcellularLocation>
        <location evidence="5 6">Secreted</location>
    </subcellularLocation>
</comment>
<comment type="tissue specificity">
    <text evidence="8 9">Expressed by the venom gland.</text>
</comment>
<comment type="mass spectrometry"/>
<comment type="miscellaneous">
    <text>The name colombistatin has been given to this protein due to its source species B.colombiensis, which is a synonym of B.atrox.</text>
</comment>
<comment type="miscellaneous">
    <text>The disintegrin belongs to the medium disintegrin subfamily.</text>
</comment>
<comment type="similarity">
    <text evidence="7">Belongs to the venom metalloproteinase (M12B) family. P-II subfamily. P-IIa sub-subfamily.</text>
</comment>
<name>VM2_BOTAT</name>
<organism>
    <name type="scientific">Bothrops atrox</name>
    <name type="common">Barba amarilla</name>
    <name type="synonym">Fer-de-lance</name>
    <dbReference type="NCBI Taxonomy" id="8725"/>
    <lineage>
        <taxon>Eukaryota</taxon>
        <taxon>Metazoa</taxon>
        <taxon>Chordata</taxon>
        <taxon>Craniata</taxon>
        <taxon>Vertebrata</taxon>
        <taxon>Euteleostomi</taxon>
        <taxon>Lepidosauria</taxon>
        <taxon>Squamata</taxon>
        <taxon>Bifurcata</taxon>
        <taxon>Unidentata</taxon>
        <taxon>Episquamata</taxon>
        <taxon>Toxicofera</taxon>
        <taxon>Serpentes</taxon>
        <taxon>Colubroidea</taxon>
        <taxon>Viperidae</taxon>
        <taxon>Crotalinae</taxon>
        <taxon>Bothrops</taxon>
    </lineage>
</organism>
<dbReference type="PIR" id="S13168">
    <property type="entry name" value="S13168"/>
</dbReference>
<dbReference type="SMR" id="P18618"/>
<dbReference type="GO" id="GO:0005576">
    <property type="term" value="C:extracellular region"/>
    <property type="evidence" value="ECO:0007669"/>
    <property type="project" value="UniProtKB-SubCell"/>
</dbReference>
<dbReference type="GO" id="GO:0005886">
    <property type="term" value="C:plasma membrane"/>
    <property type="evidence" value="ECO:0007669"/>
    <property type="project" value="TreeGrafter"/>
</dbReference>
<dbReference type="GO" id="GO:0090729">
    <property type="term" value="F:toxin activity"/>
    <property type="evidence" value="ECO:0007669"/>
    <property type="project" value="UniProtKB-KW"/>
</dbReference>
<dbReference type="FunFam" id="4.10.70.10:FF:000005">
    <property type="entry name" value="Zinc metalloproteinase/disintegrin"/>
    <property type="match status" value="1"/>
</dbReference>
<dbReference type="Gene3D" id="4.10.70.10">
    <property type="entry name" value="Disintegrin domain"/>
    <property type="match status" value="1"/>
</dbReference>
<dbReference type="InterPro" id="IPR018358">
    <property type="entry name" value="Disintegrin_CS"/>
</dbReference>
<dbReference type="InterPro" id="IPR001762">
    <property type="entry name" value="Disintegrin_dom"/>
</dbReference>
<dbReference type="InterPro" id="IPR036436">
    <property type="entry name" value="Disintegrin_dom_sf"/>
</dbReference>
<dbReference type="PANTHER" id="PTHR11905">
    <property type="entry name" value="ADAM A DISINTEGRIN AND METALLOPROTEASE DOMAIN"/>
    <property type="match status" value="1"/>
</dbReference>
<dbReference type="PANTHER" id="PTHR11905:SF32">
    <property type="entry name" value="DISINTEGRIN AND METALLOPROTEINASE DOMAIN-CONTAINING PROTEIN 28"/>
    <property type="match status" value="1"/>
</dbReference>
<dbReference type="Pfam" id="PF00200">
    <property type="entry name" value="Disintegrin"/>
    <property type="match status" value="1"/>
</dbReference>
<dbReference type="PRINTS" id="PR00289">
    <property type="entry name" value="DISINTEGRIN"/>
</dbReference>
<dbReference type="SMART" id="SM00050">
    <property type="entry name" value="DISIN"/>
    <property type="match status" value="1"/>
</dbReference>
<dbReference type="SUPFAM" id="SSF57552">
    <property type="entry name" value="Blood coagulation inhibitor (disintegrin)"/>
    <property type="match status" value="1"/>
</dbReference>
<dbReference type="PROSITE" id="PS00427">
    <property type="entry name" value="DISINTEGRIN_1"/>
    <property type="match status" value="1"/>
</dbReference>
<dbReference type="PROSITE" id="PS50214">
    <property type="entry name" value="DISINTEGRIN_2"/>
    <property type="match status" value="1"/>
</dbReference>
<feature type="chain" id="PRO_0000101785" description="Disintegrin batroxostatin" evidence="5">
    <location>
        <begin position="1"/>
        <end position="72"/>
    </location>
</feature>
<feature type="domain" description="Disintegrin" evidence="3">
    <location>
        <begin position="1"/>
        <end position="72"/>
    </location>
</feature>
<feature type="region of interest" description="Disordered" evidence="4">
    <location>
        <begin position="52"/>
        <end position="72"/>
    </location>
</feature>
<feature type="short sequence motif" description="Cell attachment site">
    <location>
        <begin position="51"/>
        <end position="53"/>
    </location>
</feature>
<feature type="disulfide bond" evidence="2">
    <location>
        <begin position="6"/>
        <end position="21"/>
    </location>
</feature>
<feature type="disulfide bond" evidence="2">
    <location>
        <begin position="8"/>
        <end position="16"/>
    </location>
</feature>
<feature type="disulfide bond" evidence="2">
    <location>
        <begin position="15"/>
        <end position="38"/>
    </location>
</feature>
<feature type="disulfide bond" evidence="2">
    <location>
        <begin position="29"/>
        <end position="35"/>
    </location>
</feature>
<feature type="disulfide bond" evidence="2">
    <location>
        <begin position="34"/>
        <end position="59"/>
    </location>
</feature>
<feature type="disulfide bond" evidence="2 3">
    <location>
        <begin position="47"/>
        <end position="66"/>
    </location>
</feature>
<feature type="sequence conflict" description="In Ref. 2; AA sequence." evidence="7" ref="2">
    <original>A</original>
    <variation>T</variation>
    <location>
        <position position="10"/>
    </location>
</feature>